<comment type="function">
    <text evidence="1">Required for disulfide bond formation in some periplasmic proteins. Acts by oxidizing the DsbA protein.</text>
</comment>
<comment type="subcellular location">
    <subcellularLocation>
        <location evidence="1">Cell inner membrane</location>
        <topology evidence="1">Multi-pass membrane protein</topology>
    </subcellularLocation>
</comment>
<comment type="similarity">
    <text evidence="1">Belongs to the DsbB family.</text>
</comment>
<organism>
    <name type="scientific">Stutzerimonas stutzeri (strain A1501)</name>
    <name type="common">Pseudomonas stutzeri</name>
    <dbReference type="NCBI Taxonomy" id="379731"/>
    <lineage>
        <taxon>Bacteria</taxon>
        <taxon>Pseudomonadati</taxon>
        <taxon>Pseudomonadota</taxon>
        <taxon>Gammaproteobacteria</taxon>
        <taxon>Pseudomonadales</taxon>
        <taxon>Pseudomonadaceae</taxon>
        <taxon>Stutzerimonas</taxon>
    </lineage>
</organism>
<dbReference type="EMBL" id="CP000304">
    <property type="protein sequence ID" value="ABP78234.1"/>
    <property type="molecule type" value="Genomic_DNA"/>
</dbReference>
<dbReference type="RefSeq" id="WP_011911761.1">
    <property type="nucleotide sequence ID" value="NC_009434.1"/>
</dbReference>
<dbReference type="SMR" id="A4VGY3"/>
<dbReference type="KEGG" id="psa:PST_0528"/>
<dbReference type="eggNOG" id="COG1495">
    <property type="taxonomic scope" value="Bacteria"/>
</dbReference>
<dbReference type="HOGENOM" id="CLU_098660_1_1_6"/>
<dbReference type="Proteomes" id="UP000000233">
    <property type="component" value="Chromosome"/>
</dbReference>
<dbReference type="GO" id="GO:0005886">
    <property type="term" value="C:plasma membrane"/>
    <property type="evidence" value="ECO:0007669"/>
    <property type="project" value="UniProtKB-SubCell"/>
</dbReference>
<dbReference type="GO" id="GO:0009055">
    <property type="term" value="F:electron transfer activity"/>
    <property type="evidence" value="ECO:0007669"/>
    <property type="project" value="UniProtKB-UniRule"/>
</dbReference>
<dbReference type="GO" id="GO:0015035">
    <property type="term" value="F:protein-disulfide reductase activity"/>
    <property type="evidence" value="ECO:0007669"/>
    <property type="project" value="UniProtKB-UniRule"/>
</dbReference>
<dbReference type="GO" id="GO:0006457">
    <property type="term" value="P:protein folding"/>
    <property type="evidence" value="ECO:0007669"/>
    <property type="project" value="InterPro"/>
</dbReference>
<dbReference type="Gene3D" id="1.20.1550.10">
    <property type="entry name" value="DsbB-like"/>
    <property type="match status" value="1"/>
</dbReference>
<dbReference type="HAMAP" id="MF_00286">
    <property type="entry name" value="DsbB"/>
    <property type="match status" value="1"/>
</dbReference>
<dbReference type="InterPro" id="IPR003752">
    <property type="entry name" value="DiS_bond_form_DsbB/BdbC"/>
</dbReference>
<dbReference type="InterPro" id="IPR022920">
    <property type="entry name" value="Disulphide_bond_form_DsbB"/>
</dbReference>
<dbReference type="InterPro" id="IPR050183">
    <property type="entry name" value="DsbB"/>
</dbReference>
<dbReference type="InterPro" id="IPR023380">
    <property type="entry name" value="DsbB-like_sf"/>
</dbReference>
<dbReference type="PANTHER" id="PTHR36570">
    <property type="entry name" value="DISULFIDE BOND FORMATION PROTEIN B"/>
    <property type="match status" value="1"/>
</dbReference>
<dbReference type="PANTHER" id="PTHR36570:SF3">
    <property type="entry name" value="DISULFIDE BOND FORMATION PROTEIN B"/>
    <property type="match status" value="1"/>
</dbReference>
<dbReference type="Pfam" id="PF02600">
    <property type="entry name" value="DsbB"/>
    <property type="match status" value="1"/>
</dbReference>
<dbReference type="SUPFAM" id="SSF158442">
    <property type="entry name" value="DsbB-like"/>
    <property type="match status" value="1"/>
</dbReference>
<feature type="chain" id="PRO_0000298391" description="Disulfide bond formation protein B">
    <location>
        <begin position="1"/>
        <end position="163"/>
    </location>
</feature>
<feature type="topological domain" description="Cytoplasmic" evidence="1">
    <location>
        <begin position="1"/>
        <end position="9"/>
    </location>
</feature>
<feature type="transmembrane region" description="Helical" evidence="1">
    <location>
        <begin position="10"/>
        <end position="26"/>
    </location>
</feature>
<feature type="topological domain" description="Periplasmic" evidence="1">
    <location>
        <begin position="27"/>
        <end position="44"/>
    </location>
</feature>
<feature type="transmembrane region" description="Helical" evidence="1">
    <location>
        <begin position="45"/>
        <end position="61"/>
    </location>
</feature>
<feature type="topological domain" description="Cytoplasmic" evidence="1">
    <location>
        <begin position="62"/>
        <end position="67"/>
    </location>
</feature>
<feature type="transmembrane region" description="Helical" evidence="1">
    <location>
        <begin position="68"/>
        <end position="85"/>
    </location>
</feature>
<feature type="topological domain" description="Periplasmic" evidence="1">
    <location>
        <begin position="86"/>
        <end position="142"/>
    </location>
</feature>
<feature type="transmembrane region" description="Helical" evidence="1">
    <location>
        <begin position="143"/>
        <end position="161"/>
    </location>
</feature>
<feature type="topological domain" description="Cytoplasmic" evidence="1">
    <location>
        <begin position="162"/>
        <end position="163"/>
    </location>
</feature>
<feature type="disulfide bond" description="Redox-active" evidence="1">
    <location>
        <begin position="36"/>
        <end position="39"/>
    </location>
</feature>
<feature type="disulfide bond" description="Redox-active" evidence="1">
    <location>
        <begin position="101"/>
        <end position="128"/>
    </location>
</feature>
<protein>
    <recommendedName>
        <fullName evidence="1">Disulfide bond formation protein B</fullName>
    </recommendedName>
    <alternativeName>
        <fullName evidence="1">Disulfide oxidoreductase</fullName>
    </alternativeName>
</protein>
<accession>A4VGY3</accession>
<reference key="1">
    <citation type="journal article" date="2008" name="Proc. Natl. Acad. Sci. U.S.A.">
        <title>Nitrogen fixation island and rhizosphere competence traits in the genome of root-associated Pseudomonas stutzeri A1501.</title>
        <authorList>
            <person name="Yan Y."/>
            <person name="Yang J."/>
            <person name="Dou Y."/>
            <person name="Chen M."/>
            <person name="Ping S."/>
            <person name="Peng J."/>
            <person name="Lu W."/>
            <person name="Zhang W."/>
            <person name="Yao Z."/>
            <person name="Li H."/>
            <person name="Liu W."/>
            <person name="He S."/>
            <person name="Geng L."/>
            <person name="Zhang X."/>
            <person name="Yang F."/>
            <person name="Yu H."/>
            <person name="Zhan Y."/>
            <person name="Li D."/>
            <person name="Lin Z."/>
            <person name="Wang Y."/>
            <person name="Elmerich C."/>
            <person name="Lin M."/>
            <person name="Jin Q."/>
        </authorList>
    </citation>
    <scope>NUCLEOTIDE SEQUENCE [LARGE SCALE GENOMIC DNA]</scope>
    <source>
        <strain>A1501</strain>
    </source>
</reference>
<proteinExistence type="inferred from homology"/>
<evidence type="ECO:0000255" key="1">
    <source>
        <dbReference type="HAMAP-Rule" id="MF_00286"/>
    </source>
</evidence>
<keyword id="KW-0997">Cell inner membrane</keyword>
<keyword id="KW-1003">Cell membrane</keyword>
<keyword id="KW-0143">Chaperone</keyword>
<keyword id="KW-1015">Disulfide bond</keyword>
<keyword id="KW-0249">Electron transport</keyword>
<keyword id="KW-0472">Membrane</keyword>
<keyword id="KW-0560">Oxidoreductase</keyword>
<keyword id="KW-0676">Redox-active center</keyword>
<keyword id="KW-1185">Reference proteome</keyword>
<keyword id="KW-0812">Transmembrane</keyword>
<keyword id="KW-1133">Transmembrane helix</keyword>
<keyword id="KW-0813">Transport</keyword>
<name>DSBB_STUS1</name>
<gene>
    <name evidence="1" type="primary">dsbB</name>
    <name type="ordered locus">PST_0528</name>
</gene>
<sequence>MRLASPRSLFVIAFLGSALLIAIALYMEHVMGLAPCPLCIVQRICVIGFGLVCLVAAIHGPAKVGRRVYAAIAALFVAAGAATAIRQIWLQSVPADQLPSCLPSLEYMMEALPFQEIARLVLHGTAECAEVSWTMLGMSIPEWSLLGFIGMAIVCLWQLLRRD</sequence>